<reference key="1">
    <citation type="journal article" date="2007" name="Mol. Genet. Genomics">
        <title>Chloroplast genomes of the diatoms Phaeodactylum tricornutum and Thalassiosira pseudonana: comparison with other plastid genomes of the red lineage.</title>
        <authorList>
            <person name="Oudot-Le Secq M.-P."/>
            <person name="Grimwood J."/>
            <person name="Shapiro H."/>
            <person name="Armbrust E.V."/>
            <person name="Bowler C."/>
            <person name="Green B.R."/>
        </authorList>
    </citation>
    <scope>NUCLEOTIDE SEQUENCE [LARGE SCALE GENOMIC DNA]</scope>
    <source>
        <strain>CCAP 1055/1</strain>
    </source>
</reference>
<comment type="function">
    <text evidence="1">Loosely associated component of the core of photosystem II (PSII), it is not always seen in crystals. PSII is a light-driven water plastoquinone oxidoreductase, using light energy to abstract electrons from H(2)O, generating a proton gradient subsequently used for ATP formation.</text>
</comment>
<comment type="subunit">
    <text evidence="1">PSII is composed of 1 copy each of membrane proteins PsbA, PsbB, PsbC, PsbD, PsbE, PsbF, PsbH, PsbI, PsbJ, PsbK, PsbL, PsbM, PsbT, PsbX, PsbY, PsbZ, Psb30/Ycf12, at least 3 peripheral proteins of the oxygen-evolving complex and a large number of cofactors. It forms dimeric complexes.</text>
</comment>
<comment type="subcellular location">
    <subcellularLocation>
        <location evidence="1">Plastid</location>
        <location evidence="1">Chloroplast thylakoid membrane</location>
        <topology evidence="1">Single-pass membrane protein</topology>
    </subcellularLocation>
</comment>
<comment type="similarity">
    <text evidence="1">Belongs to the PsbY family.</text>
</comment>
<gene>
    <name evidence="1" type="primary">psbY-A</name>
</gene>
<gene>
    <name evidence="1" type="primary">psbY-B</name>
</gene>
<name>PSBY_PHATC</name>
<geneLocation type="chloroplast"/>
<feature type="chain" id="PRO_0000277150" description="Photosystem II reaction center protein Y">
    <location>
        <begin position="1"/>
        <end position="36"/>
    </location>
</feature>
<feature type="topological domain" description="Lumenal" evidence="1">
    <location>
        <begin position="1"/>
        <end position="4"/>
    </location>
</feature>
<feature type="transmembrane region" description="Helical" evidence="1">
    <location>
        <begin position="5"/>
        <end position="23"/>
    </location>
</feature>
<feature type="topological domain" description="Stromal" evidence="1">
    <location>
        <begin position="24"/>
        <end position="36"/>
    </location>
</feature>
<dbReference type="EMBL" id="EF067920">
    <property type="protein sequence ID" value="ABK20658.1"/>
    <property type="molecule type" value="Genomic_DNA"/>
</dbReference>
<dbReference type="EMBL" id="EF067920">
    <property type="protein sequence ID" value="ABK20711.1"/>
    <property type="molecule type" value="Genomic_DNA"/>
</dbReference>
<dbReference type="SMR" id="A0T0G0"/>
<dbReference type="STRING" id="556484.A0T0G0"/>
<dbReference type="InParanoid" id="A0T0G0"/>
<dbReference type="Proteomes" id="UP000000759">
    <property type="component" value="Chloroplast"/>
</dbReference>
<dbReference type="GO" id="GO:0009535">
    <property type="term" value="C:chloroplast thylakoid membrane"/>
    <property type="evidence" value="ECO:0007669"/>
    <property type="project" value="UniProtKB-SubCell"/>
</dbReference>
<dbReference type="GO" id="GO:0009523">
    <property type="term" value="C:photosystem II"/>
    <property type="evidence" value="ECO:0007669"/>
    <property type="project" value="UniProtKB-KW"/>
</dbReference>
<dbReference type="GO" id="GO:0030145">
    <property type="term" value="F:manganese ion binding"/>
    <property type="evidence" value="ECO:0007669"/>
    <property type="project" value="InterPro"/>
</dbReference>
<dbReference type="GO" id="GO:0015979">
    <property type="term" value="P:photosynthesis"/>
    <property type="evidence" value="ECO:0007669"/>
    <property type="project" value="UniProtKB-UniRule"/>
</dbReference>
<dbReference type="HAMAP" id="MF_00717">
    <property type="entry name" value="PSII_PsbY"/>
    <property type="match status" value="1"/>
</dbReference>
<dbReference type="InterPro" id="IPR009388">
    <property type="entry name" value="PSII_PsbY"/>
</dbReference>
<dbReference type="NCBIfam" id="NF009711">
    <property type="entry name" value="PRK13240.1"/>
    <property type="match status" value="1"/>
</dbReference>
<dbReference type="Pfam" id="PF06298">
    <property type="entry name" value="PsbY"/>
    <property type="match status" value="1"/>
</dbReference>
<accession>A0T0G0</accession>
<evidence type="ECO:0000255" key="1">
    <source>
        <dbReference type="HAMAP-Rule" id="MF_00717"/>
    </source>
</evidence>
<sequence length="36" mass="4047">MDTRLIVIAAPVLVAASWALFNIGRLAIQQIQRLKR</sequence>
<organism>
    <name type="scientific">Phaeodactylum tricornutum (strain CCAP 1055/1)</name>
    <dbReference type="NCBI Taxonomy" id="556484"/>
    <lineage>
        <taxon>Eukaryota</taxon>
        <taxon>Sar</taxon>
        <taxon>Stramenopiles</taxon>
        <taxon>Ochrophyta</taxon>
        <taxon>Bacillariophyta</taxon>
        <taxon>Bacillariophyceae</taxon>
        <taxon>Bacillariophycidae</taxon>
        <taxon>Naviculales</taxon>
        <taxon>Phaeodactylaceae</taxon>
        <taxon>Phaeodactylum</taxon>
    </lineage>
</organism>
<proteinExistence type="inferred from homology"/>
<keyword id="KW-0150">Chloroplast</keyword>
<keyword id="KW-0472">Membrane</keyword>
<keyword id="KW-0602">Photosynthesis</keyword>
<keyword id="KW-0604">Photosystem II</keyword>
<keyword id="KW-0934">Plastid</keyword>
<keyword id="KW-1185">Reference proteome</keyword>
<keyword id="KW-0793">Thylakoid</keyword>
<keyword id="KW-0812">Transmembrane</keyword>
<keyword id="KW-1133">Transmembrane helix</keyword>
<protein>
    <recommendedName>
        <fullName evidence="1">Photosystem II reaction center protein Y</fullName>
    </recommendedName>
</protein>